<keyword id="KW-0312">Gluconeogenesis</keyword>
<keyword id="KW-0324">Glycolysis</keyword>
<keyword id="KW-0413">Isomerase</keyword>
<evidence type="ECO:0000255" key="1">
    <source>
        <dbReference type="HAMAP-Rule" id="MF_01039"/>
    </source>
</evidence>
<proteinExistence type="inferred from homology"/>
<name>GPMA_BURVG</name>
<organism>
    <name type="scientific">Burkholderia vietnamiensis (strain G4 / LMG 22486)</name>
    <name type="common">Burkholderia cepacia (strain R1808)</name>
    <dbReference type="NCBI Taxonomy" id="269482"/>
    <lineage>
        <taxon>Bacteria</taxon>
        <taxon>Pseudomonadati</taxon>
        <taxon>Pseudomonadota</taxon>
        <taxon>Betaproteobacteria</taxon>
        <taxon>Burkholderiales</taxon>
        <taxon>Burkholderiaceae</taxon>
        <taxon>Burkholderia</taxon>
        <taxon>Burkholderia cepacia complex</taxon>
    </lineage>
</organism>
<protein>
    <recommendedName>
        <fullName evidence="1">2,3-bisphosphoglycerate-dependent phosphoglycerate mutase</fullName>
        <shortName evidence="1">BPG-dependent PGAM</shortName>
        <shortName evidence="1">PGAM</shortName>
        <shortName evidence="1">Phosphoglyceromutase</shortName>
        <shortName evidence="1">dPGM</shortName>
        <ecNumber evidence="1">5.4.2.11</ecNumber>
    </recommendedName>
</protein>
<gene>
    <name evidence="1" type="primary">gpmA</name>
    <name type="ordered locus">Bcep1808_2957</name>
</gene>
<accession>A4JI45</accession>
<comment type="function">
    <text evidence="1">Catalyzes the interconversion of 2-phosphoglycerate and 3-phosphoglycerate.</text>
</comment>
<comment type="catalytic activity">
    <reaction evidence="1">
        <text>(2R)-2-phosphoglycerate = (2R)-3-phosphoglycerate</text>
        <dbReference type="Rhea" id="RHEA:15901"/>
        <dbReference type="ChEBI" id="CHEBI:58272"/>
        <dbReference type="ChEBI" id="CHEBI:58289"/>
        <dbReference type="EC" id="5.4.2.11"/>
    </reaction>
</comment>
<comment type="pathway">
    <text evidence="1">Carbohydrate degradation; glycolysis; pyruvate from D-glyceraldehyde 3-phosphate: step 3/5.</text>
</comment>
<comment type="subunit">
    <text evidence="1">Homodimer.</text>
</comment>
<comment type="similarity">
    <text evidence="1">Belongs to the phosphoglycerate mutase family. BPG-dependent PGAM subfamily.</text>
</comment>
<dbReference type="EC" id="5.4.2.11" evidence="1"/>
<dbReference type="EMBL" id="CP000614">
    <property type="protein sequence ID" value="ABO55948.1"/>
    <property type="molecule type" value="Genomic_DNA"/>
</dbReference>
<dbReference type="SMR" id="A4JI45"/>
<dbReference type="KEGG" id="bvi:Bcep1808_2957"/>
<dbReference type="eggNOG" id="COG0588">
    <property type="taxonomic scope" value="Bacteria"/>
</dbReference>
<dbReference type="HOGENOM" id="CLU_033323_1_1_4"/>
<dbReference type="UniPathway" id="UPA00109">
    <property type="reaction ID" value="UER00186"/>
</dbReference>
<dbReference type="Proteomes" id="UP000002287">
    <property type="component" value="Chromosome 1"/>
</dbReference>
<dbReference type="GO" id="GO:0004619">
    <property type="term" value="F:phosphoglycerate mutase activity"/>
    <property type="evidence" value="ECO:0007669"/>
    <property type="project" value="UniProtKB-EC"/>
</dbReference>
<dbReference type="GO" id="GO:0006094">
    <property type="term" value="P:gluconeogenesis"/>
    <property type="evidence" value="ECO:0007669"/>
    <property type="project" value="UniProtKB-UniRule"/>
</dbReference>
<dbReference type="GO" id="GO:0006096">
    <property type="term" value="P:glycolytic process"/>
    <property type="evidence" value="ECO:0007669"/>
    <property type="project" value="UniProtKB-UniRule"/>
</dbReference>
<dbReference type="CDD" id="cd07067">
    <property type="entry name" value="HP_PGM_like"/>
    <property type="match status" value="1"/>
</dbReference>
<dbReference type="FunFam" id="3.40.50.1240:FF:000003">
    <property type="entry name" value="2,3-bisphosphoglycerate-dependent phosphoglycerate mutase"/>
    <property type="match status" value="1"/>
</dbReference>
<dbReference type="Gene3D" id="3.40.50.1240">
    <property type="entry name" value="Phosphoglycerate mutase-like"/>
    <property type="match status" value="1"/>
</dbReference>
<dbReference type="HAMAP" id="MF_01039">
    <property type="entry name" value="PGAM_GpmA"/>
    <property type="match status" value="1"/>
</dbReference>
<dbReference type="InterPro" id="IPR013078">
    <property type="entry name" value="His_Pase_superF_clade-1"/>
</dbReference>
<dbReference type="InterPro" id="IPR029033">
    <property type="entry name" value="His_PPase_superfam"/>
</dbReference>
<dbReference type="InterPro" id="IPR001345">
    <property type="entry name" value="PG/BPGM_mutase_AS"/>
</dbReference>
<dbReference type="InterPro" id="IPR005952">
    <property type="entry name" value="Phosphogly_mut1"/>
</dbReference>
<dbReference type="NCBIfam" id="TIGR01258">
    <property type="entry name" value="pgm_1"/>
    <property type="match status" value="1"/>
</dbReference>
<dbReference type="NCBIfam" id="NF010713">
    <property type="entry name" value="PRK14115.1"/>
    <property type="match status" value="1"/>
</dbReference>
<dbReference type="PANTHER" id="PTHR11931">
    <property type="entry name" value="PHOSPHOGLYCERATE MUTASE"/>
    <property type="match status" value="1"/>
</dbReference>
<dbReference type="Pfam" id="PF00300">
    <property type="entry name" value="His_Phos_1"/>
    <property type="match status" value="2"/>
</dbReference>
<dbReference type="PIRSF" id="PIRSF000709">
    <property type="entry name" value="6PFK_2-Ptase"/>
    <property type="match status" value="1"/>
</dbReference>
<dbReference type="SMART" id="SM00855">
    <property type="entry name" value="PGAM"/>
    <property type="match status" value="1"/>
</dbReference>
<dbReference type="SUPFAM" id="SSF53254">
    <property type="entry name" value="Phosphoglycerate mutase-like"/>
    <property type="match status" value="1"/>
</dbReference>
<dbReference type="PROSITE" id="PS00175">
    <property type="entry name" value="PG_MUTASE"/>
    <property type="match status" value="1"/>
</dbReference>
<feature type="chain" id="PRO_1000064045" description="2,3-bisphosphoglycerate-dependent phosphoglycerate mutase">
    <location>
        <begin position="1"/>
        <end position="248"/>
    </location>
</feature>
<feature type="active site" description="Tele-phosphohistidine intermediate" evidence="1">
    <location>
        <position position="9"/>
    </location>
</feature>
<feature type="active site" description="Proton donor/acceptor" evidence="1">
    <location>
        <position position="87"/>
    </location>
</feature>
<feature type="binding site" evidence="1">
    <location>
        <begin position="8"/>
        <end position="15"/>
    </location>
    <ligand>
        <name>substrate</name>
    </ligand>
</feature>
<feature type="binding site" evidence="1">
    <location>
        <begin position="21"/>
        <end position="22"/>
    </location>
    <ligand>
        <name>substrate</name>
    </ligand>
</feature>
<feature type="binding site" evidence="1">
    <location>
        <position position="60"/>
    </location>
    <ligand>
        <name>substrate</name>
    </ligand>
</feature>
<feature type="binding site" evidence="1">
    <location>
        <begin position="87"/>
        <end position="90"/>
    </location>
    <ligand>
        <name>substrate</name>
    </ligand>
</feature>
<feature type="binding site" evidence="1">
    <location>
        <position position="98"/>
    </location>
    <ligand>
        <name>substrate</name>
    </ligand>
</feature>
<feature type="binding site" evidence="1">
    <location>
        <begin position="114"/>
        <end position="115"/>
    </location>
    <ligand>
        <name>substrate</name>
    </ligand>
</feature>
<feature type="binding site" evidence="1">
    <location>
        <begin position="183"/>
        <end position="184"/>
    </location>
    <ligand>
        <name>substrate</name>
    </ligand>
</feature>
<feature type="site" description="Transition state stabilizer" evidence="1">
    <location>
        <position position="182"/>
    </location>
</feature>
<reference key="1">
    <citation type="submission" date="2007-03" db="EMBL/GenBank/DDBJ databases">
        <title>Complete sequence of chromosome 1 of Burkholderia vietnamiensis G4.</title>
        <authorList>
            <consortium name="US DOE Joint Genome Institute"/>
            <person name="Copeland A."/>
            <person name="Lucas S."/>
            <person name="Lapidus A."/>
            <person name="Barry K."/>
            <person name="Detter J.C."/>
            <person name="Glavina del Rio T."/>
            <person name="Hammon N."/>
            <person name="Israni S."/>
            <person name="Dalin E."/>
            <person name="Tice H."/>
            <person name="Pitluck S."/>
            <person name="Chain P."/>
            <person name="Malfatti S."/>
            <person name="Shin M."/>
            <person name="Vergez L."/>
            <person name="Schmutz J."/>
            <person name="Larimer F."/>
            <person name="Land M."/>
            <person name="Hauser L."/>
            <person name="Kyrpides N."/>
            <person name="Tiedje J."/>
            <person name="Richardson P."/>
        </authorList>
    </citation>
    <scope>NUCLEOTIDE SEQUENCE [LARGE SCALE GENOMIC DNA]</scope>
    <source>
        <strain>G4 / LMG 22486</strain>
    </source>
</reference>
<sequence>MYKLVLIRHGESTWNKENRFTGWVDVDLTEQGRNEAYQAGALLKEAGYTFDIAYTSVLKRAIRTLWHVQDKMDLMYLPVVHSWRLNERHYGALSGLNKAETAAKFGDDQVLVWRRSYDTPPPALEPTDERAPFSDPRYAKVPREQLPLTECLKDTVARVLPLWNESIAPAVRAGKQVLIAAHGNSLRALIKYLDGISDSDIVGLNIPNGVPLVYELDENLKPIQHYYLGDQDAIAKAQAAVAKQGKAG</sequence>